<evidence type="ECO:0000255" key="1">
    <source>
        <dbReference type="HAMAP-Rule" id="MF_00512"/>
    </source>
</evidence>
<evidence type="ECO:0000305" key="2"/>
<organism>
    <name type="scientific">Methanoculleus marisnigri (strain ATCC 35101 / DSM 1498 / JR1)</name>
    <dbReference type="NCBI Taxonomy" id="368407"/>
    <lineage>
        <taxon>Archaea</taxon>
        <taxon>Methanobacteriati</taxon>
        <taxon>Methanobacteriota</taxon>
        <taxon>Stenosarchaea group</taxon>
        <taxon>Methanomicrobia</taxon>
        <taxon>Methanomicrobiales</taxon>
        <taxon>Methanomicrobiaceae</taxon>
        <taxon>Methanoculleus</taxon>
    </lineage>
</organism>
<proteinExistence type="inferred from homology"/>
<dbReference type="EMBL" id="CP000562">
    <property type="protein sequence ID" value="ABN56395.1"/>
    <property type="molecule type" value="Genomic_DNA"/>
</dbReference>
<dbReference type="RefSeq" id="WP_011843305.1">
    <property type="nucleotide sequence ID" value="NC_009051.1"/>
</dbReference>
<dbReference type="SMR" id="A3CSP5"/>
<dbReference type="STRING" id="368407.Memar_0462"/>
<dbReference type="GeneID" id="4847941"/>
<dbReference type="KEGG" id="mem:Memar_0462"/>
<dbReference type="eggNOG" id="arCOG01946">
    <property type="taxonomic scope" value="Archaea"/>
</dbReference>
<dbReference type="HOGENOM" id="CLU_109671_1_1_2"/>
<dbReference type="OrthoDB" id="7793at2157"/>
<dbReference type="Proteomes" id="UP000002146">
    <property type="component" value="Chromosome"/>
</dbReference>
<dbReference type="GO" id="GO:1990904">
    <property type="term" value="C:ribonucleoprotein complex"/>
    <property type="evidence" value="ECO:0007669"/>
    <property type="project" value="UniProtKB-KW"/>
</dbReference>
<dbReference type="GO" id="GO:0005840">
    <property type="term" value="C:ribosome"/>
    <property type="evidence" value="ECO:0007669"/>
    <property type="project" value="UniProtKB-KW"/>
</dbReference>
<dbReference type="GO" id="GO:0003735">
    <property type="term" value="F:structural constituent of ribosome"/>
    <property type="evidence" value="ECO:0007669"/>
    <property type="project" value="InterPro"/>
</dbReference>
<dbReference type="GO" id="GO:0006412">
    <property type="term" value="P:translation"/>
    <property type="evidence" value="ECO:0007669"/>
    <property type="project" value="UniProtKB-UniRule"/>
</dbReference>
<dbReference type="HAMAP" id="MF_00512">
    <property type="entry name" value="Ribosomal_eS6"/>
    <property type="match status" value="1"/>
</dbReference>
<dbReference type="InterPro" id="IPR001377">
    <property type="entry name" value="Ribosomal_eS6"/>
</dbReference>
<dbReference type="InterPro" id="IPR020924">
    <property type="entry name" value="Ribosomal_eS6_arc"/>
</dbReference>
<dbReference type="NCBIfam" id="NF003294">
    <property type="entry name" value="PRK04290.1-3"/>
    <property type="match status" value="1"/>
</dbReference>
<dbReference type="PANTHER" id="PTHR11502">
    <property type="entry name" value="40S RIBOSOMAL PROTEIN S6"/>
    <property type="match status" value="1"/>
</dbReference>
<dbReference type="Pfam" id="PF01092">
    <property type="entry name" value="Ribosomal_S6e"/>
    <property type="match status" value="1"/>
</dbReference>
<dbReference type="SMART" id="SM01405">
    <property type="entry name" value="Ribosomal_S6e"/>
    <property type="match status" value="1"/>
</dbReference>
<gene>
    <name evidence="1" type="primary">rps6e</name>
    <name type="ordered locus">Memar_0462</name>
</gene>
<protein>
    <recommendedName>
        <fullName evidence="1">Small ribosomal subunit protein eS6</fullName>
    </recommendedName>
    <alternativeName>
        <fullName evidence="2">30S ribosomal protein S6e</fullName>
    </alternativeName>
</protein>
<reference key="1">
    <citation type="journal article" date="2009" name="Stand. Genomic Sci.">
        <title>Complete genome sequence of Methanoculleus marisnigri Romesser et al. 1981 type strain JR1.</title>
        <authorList>
            <person name="Anderson I.J."/>
            <person name="Sieprawska-Lupa M."/>
            <person name="Lapidus A."/>
            <person name="Nolan M."/>
            <person name="Copeland A."/>
            <person name="Glavina Del Rio T."/>
            <person name="Tice H."/>
            <person name="Dalin E."/>
            <person name="Barry K."/>
            <person name="Saunders E."/>
            <person name="Han C."/>
            <person name="Brettin T."/>
            <person name="Detter J.C."/>
            <person name="Bruce D."/>
            <person name="Mikhailova N."/>
            <person name="Pitluck S."/>
            <person name="Hauser L."/>
            <person name="Land M."/>
            <person name="Lucas S."/>
            <person name="Richardson P."/>
            <person name="Whitman W.B."/>
            <person name="Kyrpides N.C."/>
        </authorList>
    </citation>
    <scope>NUCLEOTIDE SEQUENCE [LARGE SCALE GENOMIC DNA]</scope>
    <source>
        <strain>ATCC 35101 / DSM 1498 / JR1</strain>
    </source>
</reference>
<feature type="chain" id="PRO_1000050638" description="Small ribosomal subunit protein eS6">
    <location>
        <begin position="1"/>
        <end position="132"/>
    </location>
</feature>
<accession>A3CSP5</accession>
<name>RS6E_METMJ</name>
<keyword id="KW-0687">Ribonucleoprotein</keyword>
<keyword id="KW-0689">Ribosomal protein</keyword>
<comment type="similarity">
    <text evidence="1">Belongs to the eukaryotic ribosomal protein eS6 family.</text>
</comment>
<sequence>MADFKIILSDPETGRSYKIDATGPAAGGFVGKRIGDEIDGDVLGFAGYTIKITGATDKTGIPSRRDLPGPSRRRLLLSKGVGFHPVMDGERRRKSVRGNEISADIVQINAAVTQSGAKPLAEYFSQPEAAAE</sequence>